<sequence length="251" mass="28878">MILYEYPFNERIRTLLRLEDLFERFTFFVAQEDAREHHVALTTLFEISEVAGRADLKSDLMKELERQRQTLAPFRGNPGIEQNALEAVLGEIEQTLANLAQMQGKTGQHLIDNEWLASIRSRAVIPGGTCKFDLPSYYAWQQWPAEQRRHDIAKWAMPLLPLRDAAMIVLRLARESGQASKVMAMQGSYQQMLSGRTYQLMQVRVPPELRVIPEASANKYMLWVRFTAQDGDVRPRAVDIDVPFQLTLCNL</sequence>
<dbReference type="EMBL" id="CP000572">
    <property type="protein sequence ID" value="ABN89608.1"/>
    <property type="molecule type" value="Genomic_DNA"/>
</dbReference>
<dbReference type="RefSeq" id="WP_004195118.1">
    <property type="nucleotide sequence ID" value="NC_009076.1"/>
</dbReference>
<dbReference type="SMR" id="A3NZK0"/>
<dbReference type="GeneID" id="93061613"/>
<dbReference type="KEGG" id="bpl:BURPS1106A_3535"/>
<dbReference type="HOGENOM" id="CLU_076303_0_1_4"/>
<dbReference type="Proteomes" id="UP000006738">
    <property type="component" value="Chromosome I"/>
</dbReference>
<dbReference type="GO" id="GO:0032153">
    <property type="term" value="C:cell division site"/>
    <property type="evidence" value="ECO:0007669"/>
    <property type="project" value="TreeGrafter"/>
</dbReference>
<dbReference type="GO" id="GO:0005737">
    <property type="term" value="C:cytoplasm"/>
    <property type="evidence" value="ECO:0007669"/>
    <property type="project" value="UniProtKB-SubCell"/>
</dbReference>
<dbReference type="GO" id="GO:0000917">
    <property type="term" value="P:division septum assembly"/>
    <property type="evidence" value="ECO:0007669"/>
    <property type="project" value="UniProtKB-KW"/>
</dbReference>
<dbReference type="GO" id="GO:0043093">
    <property type="term" value="P:FtsZ-dependent cytokinesis"/>
    <property type="evidence" value="ECO:0007669"/>
    <property type="project" value="UniProtKB-UniRule"/>
</dbReference>
<dbReference type="Gene3D" id="1.10.3900.10">
    <property type="entry name" value="YacF-like"/>
    <property type="match status" value="1"/>
</dbReference>
<dbReference type="Gene3D" id="2.60.440.10">
    <property type="entry name" value="YacF-like domains"/>
    <property type="match status" value="1"/>
</dbReference>
<dbReference type="HAMAP" id="MF_01092">
    <property type="entry name" value="ZapD"/>
    <property type="match status" value="1"/>
</dbReference>
<dbReference type="InterPro" id="IPR009777">
    <property type="entry name" value="ZapD"/>
</dbReference>
<dbReference type="InterPro" id="IPR027462">
    <property type="entry name" value="ZapD_C"/>
</dbReference>
<dbReference type="InterPro" id="IPR036268">
    <property type="entry name" value="ZapD_sf"/>
</dbReference>
<dbReference type="NCBIfam" id="NF003656">
    <property type="entry name" value="PRK05287.1-4"/>
    <property type="match status" value="1"/>
</dbReference>
<dbReference type="PANTHER" id="PTHR39455">
    <property type="entry name" value="CELL DIVISION PROTEIN ZAPD"/>
    <property type="match status" value="1"/>
</dbReference>
<dbReference type="PANTHER" id="PTHR39455:SF1">
    <property type="entry name" value="CELL DIVISION PROTEIN ZAPD"/>
    <property type="match status" value="1"/>
</dbReference>
<dbReference type="Pfam" id="PF07072">
    <property type="entry name" value="ZapD"/>
    <property type="match status" value="1"/>
</dbReference>
<dbReference type="SUPFAM" id="SSF160950">
    <property type="entry name" value="YacF-like"/>
    <property type="match status" value="1"/>
</dbReference>
<protein>
    <recommendedName>
        <fullName evidence="1">Cell division protein ZapD</fullName>
    </recommendedName>
    <alternativeName>
        <fullName evidence="1">Z ring-associated protein D</fullName>
    </alternativeName>
</protein>
<keyword id="KW-0131">Cell cycle</keyword>
<keyword id="KW-0132">Cell division</keyword>
<keyword id="KW-0963">Cytoplasm</keyword>
<keyword id="KW-0717">Septation</keyword>
<organism>
    <name type="scientific">Burkholderia pseudomallei (strain 1106a)</name>
    <dbReference type="NCBI Taxonomy" id="357348"/>
    <lineage>
        <taxon>Bacteria</taxon>
        <taxon>Pseudomonadati</taxon>
        <taxon>Pseudomonadota</taxon>
        <taxon>Betaproteobacteria</taxon>
        <taxon>Burkholderiales</taxon>
        <taxon>Burkholderiaceae</taxon>
        <taxon>Burkholderia</taxon>
        <taxon>pseudomallei group</taxon>
    </lineage>
</organism>
<name>ZAPD_BURP0</name>
<accession>A3NZK0</accession>
<evidence type="ECO:0000255" key="1">
    <source>
        <dbReference type="HAMAP-Rule" id="MF_01092"/>
    </source>
</evidence>
<proteinExistence type="inferred from homology"/>
<gene>
    <name evidence="1" type="primary">zapD</name>
    <name type="ordered locus">BURPS1106A_3535</name>
</gene>
<feature type="chain" id="PRO_1000064897" description="Cell division protein ZapD">
    <location>
        <begin position="1"/>
        <end position="251"/>
    </location>
</feature>
<reference key="1">
    <citation type="journal article" date="2010" name="Genome Biol. Evol.">
        <title>Continuing evolution of Burkholderia mallei through genome reduction and large-scale rearrangements.</title>
        <authorList>
            <person name="Losada L."/>
            <person name="Ronning C.M."/>
            <person name="DeShazer D."/>
            <person name="Woods D."/>
            <person name="Fedorova N."/>
            <person name="Kim H.S."/>
            <person name="Shabalina S.A."/>
            <person name="Pearson T.R."/>
            <person name="Brinkac L."/>
            <person name="Tan P."/>
            <person name="Nandi T."/>
            <person name="Crabtree J."/>
            <person name="Badger J."/>
            <person name="Beckstrom-Sternberg S."/>
            <person name="Saqib M."/>
            <person name="Schutzer S.E."/>
            <person name="Keim P."/>
            <person name="Nierman W.C."/>
        </authorList>
    </citation>
    <scope>NUCLEOTIDE SEQUENCE [LARGE SCALE GENOMIC DNA]</scope>
    <source>
        <strain>1106a</strain>
    </source>
</reference>
<comment type="function">
    <text evidence="1">Cell division factor that enhances FtsZ-ring assembly. Directly interacts with FtsZ and promotes bundling of FtsZ protofilaments, with a reduction in FtsZ GTPase activity.</text>
</comment>
<comment type="subunit">
    <text evidence="1">Interacts with FtsZ.</text>
</comment>
<comment type="subcellular location">
    <subcellularLocation>
        <location evidence="1">Cytoplasm</location>
    </subcellularLocation>
    <text evidence="1">Localizes to mid-cell in an FtsZ-dependent manner.</text>
</comment>
<comment type="similarity">
    <text evidence="1">Belongs to the ZapD family.</text>
</comment>